<accession>Q047N5</accession>
<feature type="chain" id="PRO_1000020740" description="Glycerol kinase">
    <location>
        <begin position="1"/>
        <end position="502"/>
    </location>
</feature>
<feature type="binding site" evidence="1">
    <location>
        <position position="13"/>
    </location>
    <ligand>
        <name>ADP</name>
        <dbReference type="ChEBI" id="CHEBI:456216"/>
    </ligand>
</feature>
<feature type="binding site" evidence="1">
    <location>
        <position position="13"/>
    </location>
    <ligand>
        <name>ATP</name>
        <dbReference type="ChEBI" id="CHEBI:30616"/>
    </ligand>
</feature>
<feature type="binding site" evidence="1">
    <location>
        <position position="13"/>
    </location>
    <ligand>
        <name>sn-glycerol 3-phosphate</name>
        <dbReference type="ChEBI" id="CHEBI:57597"/>
    </ligand>
</feature>
<feature type="binding site" evidence="1">
    <location>
        <position position="14"/>
    </location>
    <ligand>
        <name>ATP</name>
        <dbReference type="ChEBI" id="CHEBI:30616"/>
    </ligand>
</feature>
<feature type="binding site" evidence="1">
    <location>
        <position position="15"/>
    </location>
    <ligand>
        <name>ATP</name>
        <dbReference type="ChEBI" id="CHEBI:30616"/>
    </ligand>
</feature>
<feature type="binding site" evidence="1">
    <location>
        <position position="17"/>
    </location>
    <ligand>
        <name>ADP</name>
        <dbReference type="ChEBI" id="CHEBI:456216"/>
    </ligand>
</feature>
<feature type="binding site" evidence="1">
    <location>
        <position position="83"/>
    </location>
    <ligand>
        <name>glycerol</name>
        <dbReference type="ChEBI" id="CHEBI:17754"/>
    </ligand>
</feature>
<feature type="binding site" evidence="1">
    <location>
        <position position="83"/>
    </location>
    <ligand>
        <name>sn-glycerol 3-phosphate</name>
        <dbReference type="ChEBI" id="CHEBI:57597"/>
    </ligand>
</feature>
<feature type="binding site" evidence="1">
    <location>
        <position position="84"/>
    </location>
    <ligand>
        <name>glycerol</name>
        <dbReference type="ChEBI" id="CHEBI:17754"/>
    </ligand>
</feature>
<feature type="binding site" evidence="1">
    <location>
        <position position="84"/>
    </location>
    <ligand>
        <name>sn-glycerol 3-phosphate</name>
        <dbReference type="ChEBI" id="CHEBI:57597"/>
    </ligand>
</feature>
<feature type="binding site" evidence="1">
    <location>
        <position position="135"/>
    </location>
    <ligand>
        <name>glycerol</name>
        <dbReference type="ChEBI" id="CHEBI:17754"/>
    </ligand>
</feature>
<feature type="binding site" evidence="1">
    <location>
        <position position="135"/>
    </location>
    <ligand>
        <name>sn-glycerol 3-phosphate</name>
        <dbReference type="ChEBI" id="CHEBI:57597"/>
    </ligand>
</feature>
<feature type="binding site" evidence="1">
    <location>
        <position position="245"/>
    </location>
    <ligand>
        <name>glycerol</name>
        <dbReference type="ChEBI" id="CHEBI:17754"/>
    </ligand>
</feature>
<feature type="binding site" evidence="1">
    <location>
        <position position="245"/>
    </location>
    <ligand>
        <name>sn-glycerol 3-phosphate</name>
        <dbReference type="ChEBI" id="CHEBI:57597"/>
    </ligand>
</feature>
<feature type="binding site" evidence="1">
    <location>
        <position position="246"/>
    </location>
    <ligand>
        <name>glycerol</name>
        <dbReference type="ChEBI" id="CHEBI:17754"/>
    </ligand>
</feature>
<feature type="binding site" evidence="1">
    <location>
        <position position="267"/>
    </location>
    <ligand>
        <name>ADP</name>
        <dbReference type="ChEBI" id="CHEBI:456216"/>
    </ligand>
</feature>
<feature type="binding site" evidence="1">
    <location>
        <position position="267"/>
    </location>
    <ligand>
        <name>ATP</name>
        <dbReference type="ChEBI" id="CHEBI:30616"/>
    </ligand>
</feature>
<feature type="binding site" evidence="1">
    <location>
        <position position="310"/>
    </location>
    <ligand>
        <name>ADP</name>
        <dbReference type="ChEBI" id="CHEBI:456216"/>
    </ligand>
</feature>
<feature type="binding site" evidence="1">
    <location>
        <position position="310"/>
    </location>
    <ligand>
        <name>ATP</name>
        <dbReference type="ChEBI" id="CHEBI:30616"/>
    </ligand>
</feature>
<feature type="binding site" evidence="1">
    <location>
        <position position="314"/>
    </location>
    <ligand>
        <name>ATP</name>
        <dbReference type="ChEBI" id="CHEBI:30616"/>
    </ligand>
</feature>
<feature type="binding site" evidence="1">
    <location>
        <position position="411"/>
    </location>
    <ligand>
        <name>ADP</name>
        <dbReference type="ChEBI" id="CHEBI:456216"/>
    </ligand>
</feature>
<feature type="binding site" evidence="1">
    <location>
        <position position="411"/>
    </location>
    <ligand>
        <name>ATP</name>
        <dbReference type="ChEBI" id="CHEBI:30616"/>
    </ligand>
</feature>
<feature type="binding site" evidence="1">
    <location>
        <position position="415"/>
    </location>
    <ligand>
        <name>ADP</name>
        <dbReference type="ChEBI" id="CHEBI:456216"/>
    </ligand>
</feature>
<comment type="function">
    <text evidence="1">Key enzyme in the regulation of glycerol uptake and metabolism. Catalyzes the phosphorylation of glycerol to yield sn-glycerol 3-phosphate.</text>
</comment>
<comment type="catalytic activity">
    <reaction evidence="1">
        <text>glycerol + ATP = sn-glycerol 3-phosphate + ADP + H(+)</text>
        <dbReference type="Rhea" id="RHEA:21644"/>
        <dbReference type="ChEBI" id="CHEBI:15378"/>
        <dbReference type="ChEBI" id="CHEBI:17754"/>
        <dbReference type="ChEBI" id="CHEBI:30616"/>
        <dbReference type="ChEBI" id="CHEBI:57597"/>
        <dbReference type="ChEBI" id="CHEBI:456216"/>
        <dbReference type="EC" id="2.7.1.30"/>
    </reaction>
</comment>
<comment type="activity regulation">
    <text evidence="1">Activated by phosphorylation and inhibited by fructose 1,6-bisphosphate (FBP).</text>
</comment>
<comment type="pathway">
    <text evidence="1">Polyol metabolism; glycerol degradation via glycerol kinase pathway; sn-glycerol 3-phosphate from glycerol: step 1/1.</text>
</comment>
<comment type="subunit">
    <text evidence="1">Homotetramer and homodimer (in equilibrium).</text>
</comment>
<comment type="similarity">
    <text evidence="1">Belongs to the FGGY kinase family.</text>
</comment>
<organism>
    <name type="scientific">Lactobacillus delbrueckii subsp. bulgaricus (strain ATCC BAA-365 / Lb-18)</name>
    <dbReference type="NCBI Taxonomy" id="321956"/>
    <lineage>
        <taxon>Bacteria</taxon>
        <taxon>Bacillati</taxon>
        <taxon>Bacillota</taxon>
        <taxon>Bacilli</taxon>
        <taxon>Lactobacillales</taxon>
        <taxon>Lactobacillaceae</taxon>
        <taxon>Lactobacillus</taxon>
    </lineage>
</organism>
<dbReference type="EC" id="2.7.1.30" evidence="1"/>
<dbReference type="EMBL" id="CP000412">
    <property type="protein sequence ID" value="ABJ59337.1"/>
    <property type="molecule type" value="Genomic_DNA"/>
</dbReference>
<dbReference type="RefSeq" id="WP_003620463.1">
    <property type="nucleotide sequence ID" value="NC_008529.1"/>
</dbReference>
<dbReference type="SMR" id="Q047N5"/>
<dbReference type="KEGG" id="lbu:LBUL_1941"/>
<dbReference type="HOGENOM" id="CLU_009281_2_3_9"/>
<dbReference type="BioCyc" id="LDEL321956:LBUL_RS09175-MONOMER"/>
<dbReference type="UniPathway" id="UPA00618">
    <property type="reaction ID" value="UER00672"/>
</dbReference>
<dbReference type="GO" id="GO:0005829">
    <property type="term" value="C:cytosol"/>
    <property type="evidence" value="ECO:0007669"/>
    <property type="project" value="TreeGrafter"/>
</dbReference>
<dbReference type="GO" id="GO:0005524">
    <property type="term" value="F:ATP binding"/>
    <property type="evidence" value="ECO:0007669"/>
    <property type="project" value="UniProtKB-UniRule"/>
</dbReference>
<dbReference type="GO" id="GO:0004370">
    <property type="term" value="F:glycerol kinase activity"/>
    <property type="evidence" value="ECO:0000250"/>
    <property type="project" value="UniProtKB"/>
</dbReference>
<dbReference type="GO" id="GO:0019563">
    <property type="term" value="P:glycerol catabolic process"/>
    <property type="evidence" value="ECO:0007669"/>
    <property type="project" value="UniProtKB-UniRule"/>
</dbReference>
<dbReference type="GO" id="GO:0006071">
    <property type="term" value="P:glycerol metabolic process"/>
    <property type="evidence" value="ECO:0000250"/>
    <property type="project" value="UniProtKB"/>
</dbReference>
<dbReference type="GO" id="GO:0006072">
    <property type="term" value="P:glycerol-3-phosphate metabolic process"/>
    <property type="evidence" value="ECO:0007669"/>
    <property type="project" value="InterPro"/>
</dbReference>
<dbReference type="CDD" id="cd07786">
    <property type="entry name" value="FGGY_EcGK_like"/>
    <property type="match status" value="1"/>
</dbReference>
<dbReference type="FunFam" id="3.30.420.40:FF:000007">
    <property type="entry name" value="Glycerol kinase"/>
    <property type="match status" value="1"/>
</dbReference>
<dbReference type="FunFam" id="3.30.420.40:FF:000008">
    <property type="entry name" value="Glycerol kinase"/>
    <property type="match status" value="1"/>
</dbReference>
<dbReference type="Gene3D" id="3.30.420.40">
    <property type="match status" value="2"/>
</dbReference>
<dbReference type="HAMAP" id="MF_00186">
    <property type="entry name" value="Glycerol_kin"/>
    <property type="match status" value="1"/>
</dbReference>
<dbReference type="InterPro" id="IPR043129">
    <property type="entry name" value="ATPase_NBD"/>
</dbReference>
<dbReference type="InterPro" id="IPR000577">
    <property type="entry name" value="Carb_kinase_FGGY"/>
</dbReference>
<dbReference type="InterPro" id="IPR018483">
    <property type="entry name" value="Carb_kinase_FGGY_CS"/>
</dbReference>
<dbReference type="InterPro" id="IPR018485">
    <property type="entry name" value="FGGY_C"/>
</dbReference>
<dbReference type="InterPro" id="IPR018484">
    <property type="entry name" value="FGGY_N"/>
</dbReference>
<dbReference type="InterPro" id="IPR005999">
    <property type="entry name" value="Glycerol_kin"/>
</dbReference>
<dbReference type="NCBIfam" id="TIGR01311">
    <property type="entry name" value="glycerol_kin"/>
    <property type="match status" value="1"/>
</dbReference>
<dbReference type="NCBIfam" id="NF000756">
    <property type="entry name" value="PRK00047.1"/>
    <property type="match status" value="1"/>
</dbReference>
<dbReference type="PANTHER" id="PTHR10196:SF69">
    <property type="entry name" value="GLYCEROL KINASE"/>
    <property type="match status" value="1"/>
</dbReference>
<dbReference type="PANTHER" id="PTHR10196">
    <property type="entry name" value="SUGAR KINASE"/>
    <property type="match status" value="1"/>
</dbReference>
<dbReference type="Pfam" id="PF02782">
    <property type="entry name" value="FGGY_C"/>
    <property type="match status" value="1"/>
</dbReference>
<dbReference type="Pfam" id="PF00370">
    <property type="entry name" value="FGGY_N"/>
    <property type="match status" value="1"/>
</dbReference>
<dbReference type="PIRSF" id="PIRSF000538">
    <property type="entry name" value="GlpK"/>
    <property type="match status" value="1"/>
</dbReference>
<dbReference type="SUPFAM" id="SSF53067">
    <property type="entry name" value="Actin-like ATPase domain"/>
    <property type="match status" value="2"/>
</dbReference>
<dbReference type="PROSITE" id="PS00933">
    <property type="entry name" value="FGGY_KINASES_1"/>
    <property type="match status" value="1"/>
</dbReference>
<dbReference type="PROSITE" id="PS00445">
    <property type="entry name" value="FGGY_KINASES_2"/>
    <property type="match status" value="1"/>
</dbReference>
<protein>
    <recommendedName>
        <fullName evidence="1">Glycerol kinase</fullName>
        <ecNumber evidence="1">2.7.1.30</ecNumber>
    </recommendedName>
    <alternativeName>
        <fullName evidence="1">ATP:glycerol 3-phosphotransferase</fullName>
    </alternativeName>
    <alternativeName>
        <fullName evidence="1">Glycerokinase</fullName>
        <shortName evidence="1">GK</shortName>
    </alternativeName>
</protein>
<evidence type="ECO:0000255" key="1">
    <source>
        <dbReference type="HAMAP-Rule" id="MF_00186"/>
    </source>
</evidence>
<proteinExistence type="inferred from homology"/>
<reference key="1">
    <citation type="journal article" date="2006" name="Proc. Natl. Acad. Sci. U.S.A.">
        <title>Comparative genomics of the lactic acid bacteria.</title>
        <authorList>
            <person name="Makarova K.S."/>
            <person name="Slesarev A."/>
            <person name="Wolf Y.I."/>
            <person name="Sorokin A."/>
            <person name="Mirkin B."/>
            <person name="Koonin E.V."/>
            <person name="Pavlov A."/>
            <person name="Pavlova N."/>
            <person name="Karamychev V."/>
            <person name="Polouchine N."/>
            <person name="Shakhova V."/>
            <person name="Grigoriev I."/>
            <person name="Lou Y."/>
            <person name="Rohksar D."/>
            <person name="Lucas S."/>
            <person name="Huang K."/>
            <person name="Goodstein D.M."/>
            <person name="Hawkins T."/>
            <person name="Plengvidhya V."/>
            <person name="Welker D."/>
            <person name="Hughes J."/>
            <person name="Goh Y."/>
            <person name="Benson A."/>
            <person name="Baldwin K."/>
            <person name="Lee J.-H."/>
            <person name="Diaz-Muniz I."/>
            <person name="Dosti B."/>
            <person name="Smeianov V."/>
            <person name="Wechter W."/>
            <person name="Barabote R."/>
            <person name="Lorca G."/>
            <person name="Altermann E."/>
            <person name="Barrangou R."/>
            <person name="Ganesan B."/>
            <person name="Xie Y."/>
            <person name="Rawsthorne H."/>
            <person name="Tamir D."/>
            <person name="Parker C."/>
            <person name="Breidt F."/>
            <person name="Broadbent J.R."/>
            <person name="Hutkins R."/>
            <person name="O'Sullivan D."/>
            <person name="Steele J."/>
            <person name="Unlu G."/>
            <person name="Saier M.H. Jr."/>
            <person name="Klaenhammer T."/>
            <person name="Richardson P."/>
            <person name="Kozyavkin S."/>
            <person name="Weimer B.C."/>
            <person name="Mills D.A."/>
        </authorList>
    </citation>
    <scope>NUCLEOTIDE SEQUENCE [LARGE SCALE GENOMIC DNA]</scope>
    <source>
        <strain>ATCC BAA-365 / Lb-18</strain>
    </source>
</reference>
<name>GLPK_LACDB</name>
<keyword id="KW-0067">ATP-binding</keyword>
<keyword id="KW-0319">Glycerol metabolism</keyword>
<keyword id="KW-0418">Kinase</keyword>
<keyword id="KW-0547">Nucleotide-binding</keyword>
<keyword id="KW-0808">Transferase</keyword>
<gene>
    <name evidence="1" type="primary">glpK</name>
    <name type="ordered locus">LBUL_1941</name>
</gene>
<sequence>MSEQYILAIDEGTTSTREIIFNYAGQQVASVAREFTQYFPKPGWVEHQAEEIWNAVQITTSTALINSAIRPDQLAVIGITNQRETTVVWDKETGRPIYPAIVWQSRQTSDIAEKLVKDSYSEMIRQKTGLVIAPYFSATKIRWILDHLEGAQERAEKGELLFGTIDTWLVWKLTRGKVHVTDCTNASRTMLFNIHDLTWDQEILDLLKIPRTMLPEVKSNSEVYGETDPYQFFGGRVPIAGMAGDQQAALFGQLAVKPGMVKNTYETGSFIVMNTGEEPIESKNNLLTTIGYKLGDQVNYALEGSVFVAGSAIQWLRDSVKLLNSAPESEQAALESKDANEVYVVPAFTGLGAPYWDSEARGAIFGLTRGSSDKDLIKATLQSLAYQTRDVVDTMQKDSGIEIPVLRVDGGASNNNYLLQFQADLLGKKIERAADLETTGLGAAFLAGLAVGYWQDLDSLKEIAKTGAAFAPKMEEAERDRLYAGWQRAVLATRVFAHGKDF</sequence>